<sequence length="456" mass="48860">MNTVRETIAAIATAQGRGGVGIVRLSGPLAAKAGQLITGRTLTPRHAHYGPFRDQEGLVLDEGIALFFPGPNSFTGEDVLELQGHGGPVVLDMLLQRCVQVGCRLARPGEFSERAFLNDKLDLAQAEAIADLIEASSSQAARNALRSLQGEFSKRVHSLTEALIALRIYVEAAIDFPEEEIDFLADGHVLSMLDSVRAELSTVQREAGQGALLRDGMTVVIAGRPNAGKSSLLNQLAGREAAIVTAIAGTTRDILREHIHIDGMPLHVVDTAGLRDTDDHVEKIGVERALKAIGEADRVLLVVDSTAPEASDPFALWPEFLDQRPDPGKVTLIRNKADLSGEPVGLEQCDDGHVTITLSAKGDDQGLLLLRDHLKACMGYEQTAESGFSARRRHLDALRQACAHLEHGRAQLTLAGAGELLAEDLRQAQHALGEITGAFSSDDLLGRIFSSFCIGK</sequence>
<gene>
    <name evidence="1" type="primary">mnmE</name>
    <name evidence="1" type="synonym">trmE</name>
    <name type="ordered locus">PputW619_5212</name>
</gene>
<name>MNME_PSEPW</name>
<feature type="chain" id="PRO_0000345876" description="tRNA modification GTPase MnmE">
    <location>
        <begin position="1"/>
        <end position="456"/>
    </location>
</feature>
<feature type="domain" description="TrmE-type G">
    <location>
        <begin position="216"/>
        <end position="379"/>
    </location>
</feature>
<feature type="binding site" evidence="1">
    <location>
        <position position="24"/>
    </location>
    <ligand>
        <name>(6S)-5-formyl-5,6,7,8-tetrahydrofolate</name>
        <dbReference type="ChEBI" id="CHEBI:57457"/>
    </ligand>
</feature>
<feature type="binding site" evidence="1">
    <location>
        <position position="81"/>
    </location>
    <ligand>
        <name>(6S)-5-formyl-5,6,7,8-tetrahydrofolate</name>
        <dbReference type="ChEBI" id="CHEBI:57457"/>
    </ligand>
</feature>
<feature type="binding site" evidence="1">
    <location>
        <position position="120"/>
    </location>
    <ligand>
        <name>(6S)-5-formyl-5,6,7,8-tetrahydrofolate</name>
        <dbReference type="ChEBI" id="CHEBI:57457"/>
    </ligand>
</feature>
<feature type="binding site" evidence="1">
    <location>
        <begin position="226"/>
        <end position="231"/>
    </location>
    <ligand>
        <name>GTP</name>
        <dbReference type="ChEBI" id="CHEBI:37565"/>
    </ligand>
</feature>
<feature type="binding site" evidence="1">
    <location>
        <position position="226"/>
    </location>
    <ligand>
        <name>K(+)</name>
        <dbReference type="ChEBI" id="CHEBI:29103"/>
    </ligand>
</feature>
<feature type="binding site" evidence="1">
    <location>
        <position position="230"/>
    </location>
    <ligand>
        <name>Mg(2+)</name>
        <dbReference type="ChEBI" id="CHEBI:18420"/>
    </ligand>
</feature>
<feature type="binding site" evidence="1">
    <location>
        <begin position="245"/>
        <end position="251"/>
    </location>
    <ligand>
        <name>GTP</name>
        <dbReference type="ChEBI" id="CHEBI:37565"/>
    </ligand>
</feature>
<feature type="binding site" evidence="1">
    <location>
        <position position="245"/>
    </location>
    <ligand>
        <name>K(+)</name>
        <dbReference type="ChEBI" id="CHEBI:29103"/>
    </ligand>
</feature>
<feature type="binding site" evidence="1">
    <location>
        <position position="247"/>
    </location>
    <ligand>
        <name>K(+)</name>
        <dbReference type="ChEBI" id="CHEBI:29103"/>
    </ligand>
</feature>
<feature type="binding site" evidence="1">
    <location>
        <position position="250"/>
    </location>
    <ligand>
        <name>K(+)</name>
        <dbReference type="ChEBI" id="CHEBI:29103"/>
    </ligand>
</feature>
<feature type="binding site" evidence="1">
    <location>
        <position position="251"/>
    </location>
    <ligand>
        <name>Mg(2+)</name>
        <dbReference type="ChEBI" id="CHEBI:18420"/>
    </ligand>
</feature>
<feature type="binding site" evidence="1">
    <location>
        <begin position="270"/>
        <end position="273"/>
    </location>
    <ligand>
        <name>GTP</name>
        <dbReference type="ChEBI" id="CHEBI:37565"/>
    </ligand>
</feature>
<feature type="binding site" evidence="1">
    <location>
        <begin position="335"/>
        <end position="338"/>
    </location>
    <ligand>
        <name>GTP</name>
        <dbReference type="ChEBI" id="CHEBI:37565"/>
    </ligand>
</feature>
<feature type="binding site" evidence="1">
    <location>
        <position position="456"/>
    </location>
    <ligand>
        <name>(6S)-5-formyl-5,6,7,8-tetrahydrofolate</name>
        <dbReference type="ChEBI" id="CHEBI:57457"/>
    </ligand>
</feature>
<proteinExistence type="inferred from homology"/>
<keyword id="KW-0963">Cytoplasm</keyword>
<keyword id="KW-0342">GTP-binding</keyword>
<keyword id="KW-0378">Hydrolase</keyword>
<keyword id="KW-0460">Magnesium</keyword>
<keyword id="KW-0479">Metal-binding</keyword>
<keyword id="KW-0547">Nucleotide-binding</keyword>
<keyword id="KW-0630">Potassium</keyword>
<keyword id="KW-0819">tRNA processing</keyword>
<reference key="1">
    <citation type="submission" date="2008-02" db="EMBL/GenBank/DDBJ databases">
        <title>Complete sequence of Pseudomonas putida W619.</title>
        <authorList>
            <person name="Copeland A."/>
            <person name="Lucas S."/>
            <person name="Lapidus A."/>
            <person name="Barry K."/>
            <person name="Detter J.C."/>
            <person name="Glavina del Rio T."/>
            <person name="Dalin E."/>
            <person name="Tice H."/>
            <person name="Pitluck S."/>
            <person name="Chain P."/>
            <person name="Malfatti S."/>
            <person name="Shin M."/>
            <person name="Vergez L."/>
            <person name="Schmutz J."/>
            <person name="Larimer F."/>
            <person name="Land M."/>
            <person name="Hauser L."/>
            <person name="Kyrpides N."/>
            <person name="Kim E."/>
            <person name="Taghavi S."/>
            <person name="Vangronsveld D."/>
            <person name="van der Lelie D."/>
            <person name="Richardson P."/>
        </authorList>
    </citation>
    <scope>NUCLEOTIDE SEQUENCE [LARGE SCALE GENOMIC DNA]</scope>
    <source>
        <strain>W619</strain>
    </source>
</reference>
<comment type="function">
    <text evidence="1">Exhibits a very high intrinsic GTPase hydrolysis rate. Involved in the addition of a carboxymethylaminomethyl (cmnm) group at the wobble position (U34) of certain tRNAs, forming tRNA-cmnm(5)s(2)U34.</text>
</comment>
<comment type="cofactor">
    <cofactor evidence="1">
        <name>K(+)</name>
        <dbReference type="ChEBI" id="CHEBI:29103"/>
    </cofactor>
    <text evidence="1">Binds 1 potassium ion per subunit.</text>
</comment>
<comment type="subunit">
    <text evidence="1">Homodimer. Heterotetramer of two MnmE and two MnmG subunits.</text>
</comment>
<comment type="subcellular location">
    <subcellularLocation>
        <location evidence="1">Cytoplasm</location>
    </subcellularLocation>
</comment>
<comment type="similarity">
    <text evidence="1">Belongs to the TRAFAC class TrmE-Era-EngA-EngB-Septin-like GTPase superfamily. TrmE GTPase family.</text>
</comment>
<evidence type="ECO:0000255" key="1">
    <source>
        <dbReference type="HAMAP-Rule" id="MF_00379"/>
    </source>
</evidence>
<organism>
    <name type="scientific">Pseudomonas putida (strain W619)</name>
    <dbReference type="NCBI Taxonomy" id="390235"/>
    <lineage>
        <taxon>Bacteria</taxon>
        <taxon>Pseudomonadati</taxon>
        <taxon>Pseudomonadota</taxon>
        <taxon>Gammaproteobacteria</taxon>
        <taxon>Pseudomonadales</taxon>
        <taxon>Pseudomonadaceae</taxon>
        <taxon>Pseudomonas</taxon>
    </lineage>
</organism>
<dbReference type="EC" id="3.6.-.-" evidence="1"/>
<dbReference type="EMBL" id="CP000949">
    <property type="protein sequence ID" value="ACA75687.1"/>
    <property type="molecule type" value="Genomic_DNA"/>
</dbReference>
<dbReference type="SMR" id="B1JFV3"/>
<dbReference type="STRING" id="390235.PputW619_5212"/>
<dbReference type="KEGG" id="ppw:PputW619_5212"/>
<dbReference type="eggNOG" id="COG0486">
    <property type="taxonomic scope" value="Bacteria"/>
</dbReference>
<dbReference type="HOGENOM" id="CLU_019624_4_1_6"/>
<dbReference type="OrthoDB" id="9805918at2"/>
<dbReference type="GO" id="GO:0005829">
    <property type="term" value="C:cytosol"/>
    <property type="evidence" value="ECO:0007669"/>
    <property type="project" value="TreeGrafter"/>
</dbReference>
<dbReference type="GO" id="GO:0005525">
    <property type="term" value="F:GTP binding"/>
    <property type="evidence" value="ECO:0007669"/>
    <property type="project" value="UniProtKB-UniRule"/>
</dbReference>
<dbReference type="GO" id="GO:0003924">
    <property type="term" value="F:GTPase activity"/>
    <property type="evidence" value="ECO:0007669"/>
    <property type="project" value="UniProtKB-UniRule"/>
</dbReference>
<dbReference type="GO" id="GO:0046872">
    <property type="term" value="F:metal ion binding"/>
    <property type="evidence" value="ECO:0007669"/>
    <property type="project" value="UniProtKB-KW"/>
</dbReference>
<dbReference type="GO" id="GO:0030488">
    <property type="term" value="P:tRNA methylation"/>
    <property type="evidence" value="ECO:0007669"/>
    <property type="project" value="TreeGrafter"/>
</dbReference>
<dbReference type="GO" id="GO:0002098">
    <property type="term" value="P:tRNA wobble uridine modification"/>
    <property type="evidence" value="ECO:0007669"/>
    <property type="project" value="TreeGrafter"/>
</dbReference>
<dbReference type="CDD" id="cd04164">
    <property type="entry name" value="trmE"/>
    <property type="match status" value="1"/>
</dbReference>
<dbReference type="CDD" id="cd14858">
    <property type="entry name" value="TrmE_N"/>
    <property type="match status" value="1"/>
</dbReference>
<dbReference type="FunFam" id="3.30.1360.120:FF:000001">
    <property type="entry name" value="tRNA modification GTPase MnmE"/>
    <property type="match status" value="1"/>
</dbReference>
<dbReference type="FunFam" id="3.40.50.300:FF:000249">
    <property type="entry name" value="tRNA modification GTPase MnmE"/>
    <property type="match status" value="1"/>
</dbReference>
<dbReference type="Gene3D" id="3.40.50.300">
    <property type="entry name" value="P-loop containing nucleotide triphosphate hydrolases"/>
    <property type="match status" value="1"/>
</dbReference>
<dbReference type="Gene3D" id="3.30.1360.120">
    <property type="entry name" value="Probable tRNA modification gtpase trme, domain 1"/>
    <property type="match status" value="1"/>
</dbReference>
<dbReference type="Gene3D" id="1.20.120.430">
    <property type="entry name" value="tRNA modification GTPase MnmE domain 2"/>
    <property type="match status" value="1"/>
</dbReference>
<dbReference type="HAMAP" id="MF_00379">
    <property type="entry name" value="GTPase_MnmE"/>
    <property type="match status" value="1"/>
</dbReference>
<dbReference type="InterPro" id="IPR031168">
    <property type="entry name" value="G_TrmE"/>
</dbReference>
<dbReference type="InterPro" id="IPR006073">
    <property type="entry name" value="GTP-bd"/>
</dbReference>
<dbReference type="InterPro" id="IPR018948">
    <property type="entry name" value="GTP-bd_TrmE_N"/>
</dbReference>
<dbReference type="InterPro" id="IPR004520">
    <property type="entry name" value="GTPase_MnmE"/>
</dbReference>
<dbReference type="InterPro" id="IPR027368">
    <property type="entry name" value="MnmE_dom2"/>
</dbReference>
<dbReference type="InterPro" id="IPR025867">
    <property type="entry name" value="MnmE_helical"/>
</dbReference>
<dbReference type="InterPro" id="IPR027417">
    <property type="entry name" value="P-loop_NTPase"/>
</dbReference>
<dbReference type="InterPro" id="IPR005225">
    <property type="entry name" value="Small_GTP-bd"/>
</dbReference>
<dbReference type="InterPro" id="IPR027266">
    <property type="entry name" value="TrmE/GcvT_dom1"/>
</dbReference>
<dbReference type="NCBIfam" id="TIGR00450">
    <property type="entry name" value="mnmE_trmE_thdF"/>
    <property type="match status" value="1"/>
</dbReference>
<dbReference type="NCBIfam" id="NF003661">
    <property type="entry name" value="PRK05291.1-3"/>
    <property type="match status" value="1"/>
</dbReference>
<dbReference type="NCBIfam" id="TIGR00231">
    <property type="entry name" value="small_GTP"/>
    <property type="match status" value="1"/>
</dbReference>
<dbReference type="PANTHER" id="PTHR42714">
    <property type="entry name" value="TRNA MODIFICATION GTPASE GTPBP3"/>
    <property type="match status" value="1"/>
</dbReference>
<dbReference type="PANTHER" id="PTHR42714:SF2">
    <property type="entry name" value="TRNA MODIFICATION GTPASE GTPBP3, MITOCHONDRIAL"/>
    <property type="match status" value="1"/>
</dbReference>
<dbReference type="Pfam" id="PF01926">
    <property type="entry name" value="MMR_HSR1"/>
    <property type="match status" value="1"/>
</dbReference>
<dbReference type="Pfam" id="PF12631">
    <property type="entry name" value="MnmE_helical"/>
    <property type="match status" value="1"/>
</dbReference>
<dbReference type="Pfam" id="PF10396">
    <property type="entry name" value="TrmE_N"/>
    <property type="match status" value="1"/>
</dbReference>
<dbReference type="SUPFAM" id="SSF52540">
    <property type="entry name" value="P-loop containing nucleoside triphosphate hydrolases"/>
    <property type="match status" value="1"/>
</dbReference>
<dbReference type="SUPFAM" id="SSF116878">
    <property type="entry name" value="TrmE connector domain"/>
    <property type="match status" value="1"/>
</dbReference>
<dbReference type="PROSITE" id="PS51709">
    <property type="entry name" value="G_TRME"/>
    <property type="match status" value="1"/>
</dbReference>
<accession>B1JFV3</accession>
<protein>
    <recommendedName>
        <fullName evidence="1">tRNA modification GTPase MnmE</fullName>
        <ecNumber evidence="1">3.6.-.-</ecNumber>
    </recommendedName>
</protein>